<keyword id="KW-1222">Bradykinin receptor impairing toxin</keyword>
<keyword id="KW-0903">Direct protein sequencing</keyword>
<keyword id="KW-1213">G-protein coupled receptor impairing toxin</keyword>
<keyword id="KW-0325">Glycoprotein</keyword>
<keyword id="KW-0382">Hypotensive agent</keyword>
<keyword id="KW-0964">Secreted</keyword>
<keyword id="KW-0800">Toxin</keyword>
<keyword id="KW-0838">Vasoactive</keyword>
<keyword id="KW-0840">Vasodilator</keyword>
<name>BRK_VESMC</name>
<reference key="1">
    <citation type="journal article" date="1976" name="Biochemistry">
        <title>Vespulakinins: new carbohydrate-containing bradykinin derivatives.</title>
        <authorList>
            <person name="Yoshida H."/>
            <person name="Geller R.G."/>
            <person name="Pisano J.J."/>
        </authorList>
    </citation>
    <scope>PROTEIN SEQUENCE</scope>
    <scope>SUBCELLULAR LOCATION</scope>
    <scope>GLYCOSYLATION AT THR-3 AND THR-4</scope>
    <source>
        <tissue>Venom</tissue>
    </source>
</reference>
<reference key="2">
    <citation type="journal article" date="1987" name="Int. J. Pept. Protein Res.">
        <title>Synthesis, conformation, and biological activity of the carbohydrate-free vespulakinin 1.</title>
        <authorList>
            <person name="Rocchi R."/>
            <person name="Biondi L."/>
            <person name="Filira F."/>
            <person name="Scolaro B."/>
        </authorList>
    </citation>
    <scope>SYNTHESIS</scope>
</reference>
<sequence length="17" mass="1960">TATTRRRGRPPGFSPFR</sequence>
<dbReference type="PIR" id="A61339">
    <property type="entry name" value="A61339"/>
</dbReference>
<dbReference type="iPTMnet" id="P57672"/>
<dbReference type="GO" id="GO:0005576">
    <property type="term" value="C:extracellular region"/>
    <property type="evidence" value="ECO:0007669"/>
    <property type="project" value="UniProtKB-SubCell"/>
</dbReference>
<dbReference type="GO" id="GO:0090729">
    <property type="term" value="F:toxin activity"/>
    <property type="evidence" value="ECO:0007669"/>
    <property type="project" value="UniProtKB-KW"/>
</dbReference>
<dbReference type="GO" id="GO:0008217">
    <property type="term" value="P:regulation of blood pressure"/>
    <property type="evidence" value="ECO:0007669"/>
    <property type="project" value="UniProtKB-KW"/>
</dbReference>
<dbReference type="GO" id="GO:0042311">
    <property type="term" value="P:vasodilation"/>
    <property type="evidence" value="ECO:0007669"/>
    <property type="project" value="UniProtKB-KW"/>
</dbReference>
<proteinExistence type="evidence at protein level"/>
<evidence type="ECO:0000269" key="1">
    <source>
    </source>
</evidence>
<evidence type="ECO:0000303" key="2">
    <source>
    </source>
</evidence>
<evidence type="ECO:0000303" key="3">
    <source>
    </source>
</evidence>
<evidence type="ECO:0000305" key="4"/>
<feature type="peptide" id="PRO_0000003383" description="Vespulakinin-1" evidence="1">
    <location>
        <begin position="1"/>
        <end position="17"/>
    </location>
</feature>
<feature type="peptide" id="PRO_0000003384" description="Vespulakinin-2" evidence="1">
    <location>
        <begin position="3"/>
        <end position="17"/>
    </location>
</feature>
<feature type="glycosylation site" description="O-linked (GalNAc...) threonine" evidence="1">
    <location>
        <position position="3"/>
    </location>
</feature>
<feature type="glycosylation site" description="O-linked (GalNAc...) threonine" evidence="1">
    <location>
        <position position="4"/>
    </location>
</feature>
<comment type="function">
    <text>Induces smooth muscle contraction. May target bradykinin receptors (BDKRB). May cause hypotension.</text>
</comment>
<comment type="subcellular location">
    <subcellularLocation>
        <location evidence="1">Secreted</location>
    </subcellularLocation>
</comment>
<comment type="tissue specificity">
    <text evidence="1">Expressed by the venom gland.</text>
</comment>
<comment type="similarity">
    <text evidence="4">Belongs to the bradykinin-related peptide family.</text>
</comment>
<organism>
    <name type="scientific">Vespula maculifrons</name>
    <name type="common">Eastern yellow jacket</name>
    <name type="synonym">Wasp</name>
    <dbReference type="NCBI Taxonomy" id="7453"/>
    <lineage>
        <taxon>Eukaryota</taxon>
        <taxon>Metazoa</taxon>
        <taxon>Ecdysozoa</taxon>
        <taxon>Arthropoda</taxon>
        <taxon>Hexapoda</taxon>
        <taxon>Insecta</taxon>
        <taxon>Pterygota</taxon>
        <taxon>Neoptera</taxon>
        <taxon>Endopterygota</taxon>
        <taxon>Hymenoptera</taxon>
        <taxon>Apocrita</taxon>
        <taxon>Aculeata</taxon>
        <taxon>Vespoidea</taxon>
        <taxon>Vespidae</taxon>
        <taxon>Vespinae</taxon>
        <taxon>Vespula</taxon>
    </lineage>
</organism>
<accession>P57672</accession>
<protein>
    <recommendedName>
        <fullName evidence="2 3">Vespulakinin-1</fullName>
    </recommendedName>
    <component>
        <recommendedName>
            <fullName evidence="2">Vespulakinin-2</fullName>
        </recommendedName>
        <alternativeName>
            <fullName evidence="4">Bradykinin-related peptide</fullName>
        </alternativeName>
    </component>
</protein>